<keyword id="KW-0007">Acetylation</keyword>
<keyword id="KW-0963">Cytoplasm</keyword>
<keyword id="KW-0251">Elongation factor</keyword>
<keyword id="KW-0342">GTP-binding</keyword>
<keyword id="KW-0547">Nucleotide-binding</keyword>
<keyword id="KW-0648">Protein biosynthesis</keyword>
<evidence type="ECO:0000250" key="1"/>
<evidence type="ECO:0000255" key="2">
    <source>
        <dbReference type="HAMAP-Rule" id="MF_00054"/>
    </source>
</evidence>
<sequence>MARTTPIARYRNIGISAHIDAGKTTTTERILFYTGVNHKIGEVHDGAATMDWMEQEQERGITITSAATTAFWSGMAKQYEPHRINIIDTPGHVDFTIEVERSMRVLDGAVMVYCAVGGVQPQSETVWRQANKYKVPRIAFVNKMDRVGANFLKVVNQIKTRLGANPVPLQLAIGAEEHFTGVVDLVKMKAINWNDADQGVTFEYEDIPADMVELANEWHQNLIESAAEASEELMEKYLGGEELTEAEIKGALRQRVLNNEIILVTCGSAFKNKGVQAMLDAVIDYLPSPVDVPAINGILDDGKDTPAERHASDDEPFSALAFKIATDPFVGNLTFFRVYSGVVNSGDTVLNSVKAARERFGRIVQMHANKREEIKEVRAGDIAAAIGLKDVTTGDTLCDPDAPIILERMEFPEPVISIAVEPKTKADQEKMGLALGRLAKEDPSFRVWTDEESNQTIIAGMGELHLDIIVDRMKREFNVEANVGKPQVAYRETIRQKVTDVEGKHAKQSGGRGQYGHVVIDMYPLEPGSNPKGYEFINDIKGGVIPGEYIPAVDKGIQEQLKAGPLAGYPVVDMGIRLHFGSYHDVDSSELAFKLAASIAFKEGFKKAKPVLLEPIMKVEVETPEENTGDVIGDLSRRRGMLKGQESEVTGVKIHAEVPLSEMFGYATQLRSLTKGRASYTMEFLKYDEAPSNVAQAVIEARGK</sequence>
<feature type="chain" id="PRO_1000008881" description="Elongation factor G">
    <location>
        <begin position="1"/>
        <end position="704"/>
    </location>
</feature>
<feature type="domain" description="tr-type G">
    <location>
        <begin position="8"/>
        <end position="290"/>
    </location>
</feature>
<feature type="binding site" evidence="2">
    <location>
        <begin position="17"/>
        <end position="24"/>
    </location>
    <ligand>
        <name>GTP</name>
        <dbReference type="ChEBI" id="CHEBI:37565"/>
    </ligand>
</feature>
<feature type="binding site" evidence="2">
    <location>
        <begin position="88"/>
        <end position="92"/>
    </location>
    <ligand>
        <name>GTP</name>
        <dbReference type="ChEBI" id="CHEBI:37565"/>
    </ligand>
</feature>
<feature type="binding site" evidence="2">
    <location>
        <begin position="142"/>
        <end position="145"/>
    </location>
    <ligand>
        <name>GTP</name>
        <dbReference type="ChEBI" id="CHEBI:37565"/>
    </ligand>
</feature>
<feature type="modified residue" description="N6-acetyllysine" evidence="1">
    <location>
        <position position="504"/>
    </location>
</feature>
<feature type="modified residue" description="N6-acetyllysine" evidence="1">
    <location>
        <position position="643"/>
    </location>
</feature>
<comment type="function">
    <text evidence="2">Catalyzes the GTP-dependent ribosomal translocation step during translation elongation. During this step, the ribosome changes from the pre-translocational (PRE) to the post-translocational (POST) state as the newly formed A-site-bound peptidyl-tRNA and P-site-bound deacylated tRNA move to the P and E sites, respectively. Catalyzes the coordinated movement of the two tRNA molecules, the mRNA and conformational changes in the ribosome.</text>
</comment>
<comment type="subcellular location">
    <subcellularLocation>
        <location evidence="2">Cytoplasm</location>
    </subcellularLocation>
</comment>
<comment type="similarity">
    <text evidence="2">Belongs to the TRAFAC class translation factor GTPase superfamily. Classic translation factor GTPase family. EF-G/EF-2 subfamily.</text>
</comment>
<protein>
    <recommendedName>
        <fullName evidence="2">Elongation factor G</fullName>
        <shortName evidence="2">EF-G</shortName>
    </recommendedName>
</protein>
<proteinExistence type="inferred from homology"/>
<reference key="1">
    <citation type="journal article" date="2006" name="BMC Genomics">
        <title>Complete genome sequence of Shigella flexneri 5b and comparison with Shigella flexneri 2a.</title>
        <authorList>
            <person name="Nie H."/>
            <person name="Yang F."/>
            <person name="Zhang X."/>
            <person name="Yang J."/>
            <person name="Chen L."/>
            <person name="Wang J."/>
            <person name="Xiong Z."/>
            <person name="Peng J."/>
            <person name="Sun L."/>
            <person name="Dong J."/>
            <person name="Xue Y."/>
            <person name="Xu X."/>
            <person name="Chen S."/>
            <person name="Yao Z."/>
            <person name="Shen Y."/>
            <person name="Jin Q."/>
        </authorList>
    </citation>
    <scope>NUCLEOTIDE SEQUENCE [LARGE SCALE GENOMIC DNA]</scope>
    <source>
        <strain>8401</strain>
    </source>
</reference>
<dbReference type="EMBL" id="CP000266">
    <property type="protein sequence ID" value="ABF05388.1"/>
    <property type="molecule type" value="Genomic_DNA"/>
</dbReference>
<dbReference type="RefSeq" id="WP_000124706.1">
    <property type="nucleotide sequence ID" value="NC_008258.1"/>
</dbReference>
<dbReference type="SMR" id="Q0SZX7"/>
<dbReference type="KEGG" id="sfv:SFV_3345"/>
<dbReference type="HOGENOM" id="CLU_002794_4_1_6"/>
<dbReference type="Proteomes" id="UP000000659">
    <property type="component" value="Chromosome"/>
</dbReference>
<dbReference type="GO" id="GO:0005737">
    <property type="term" value="C:cytoplasm"/>
    <property type="evidence" value="ECO:0007669"/>
    <property type="project" value="UniProtKB-SubCell"/>
</dbReference>
<dbReference type="GO" id="GO:0005525">
    <property type="term" value="F:GTP binding"/>
    <property type="evidence" value="ECO:0007669"/>
    <property type="project" value="UniProtKB-UniRule"/>
</dbReference>
<dbReference type="GO" id="GO:0003924">
    <property type="term" value="F:GTPase activity"/>
    <property type="evidence" value="ECO:0007669"/>
    <property type="project" value="InterPro"/>
</dbReference>
<dbReference type="GO" id="GO:0097216">
    <property type="term" value="F:guanosine tetraphosphate binding"/>
    <property type="evidence" value="ECO:0007669"/>
    <property type="project" value="UniProtKB-ARBA"/>
</dbReference>
<dbReference type="GO" id="GO:0003746">
    <property type="term" value="F:translation elongation factor activity"/>
    <property type="evidence" value="ECO:0007669"/>
    <property type="project" value="UniProtKB-UniRule"/>
</dbReference>
<dbReference type="GO" id="GO:0032790">
    <property type="term" value="P:ribosome disassembly"/>
    <property type="evidence" value="ECO:0007669"/>
    <property type="project" value="TreeGrafter"/>
</dbReference>
<dbReference type="CDD" id="cd01886">
    <property type="entry name" value="EF-G"/>
    <property type="match status" value="1"/>
</dbReference>
<dbReference type="CDD" id="cd16262">
    <property type="entry name" value="EFG_III"/>
    <property type="match status" value="1"/>
</dbReference>
<dbReference type="CDD" id="cd01434">
    <property type="entry name" value="EFG_mtEFG1_IV"/>
    <property type="match status" value="1"/>
</dbReference>
<dbReference type="CDD" id="cd03713">
    <property type="entry name" value="EFG_mtEFG_C"/>
    <property type="match status" value="1"/>
</dbReference>
<dbReference type="CDD" id="cd04088">
    <property type="entry name" value="EFG_mtEFG_II"/>
    <property type="match status" value="1"/>
</dbReference>
<dbReference type="FunFam" id="2.40.30.10:FF:000006">
    <property type="entry name" value="Elongation factor G"/>
    <property type="match status" value="1"/>
</dbReference>
<dbReference type="FunFam" id="3.30.230.10:FF:000003">
    <property type="entry name" value="Elongation factor G"/>
    <property type="match status" value="1"/>
</dbReference>
<dbReference type="FunFam" id="3.30.70.240:FF:000001">
    <property type="entry name" value="Elongation factor G"/>
    <property type="match status" value="1"/>
</dbReference>
<dbReference type="FunFam" id="3.30.70.870:FF:000001">
    <property type="entry name" value="Elongation factor G"/>
    <property type="match status" value="1"/>
</dbReference>
<dbReference type="FunFam" id="3.40.50.300:FF:000029">
    <property type="entry name" value="Elongation factor G"/>
    <property type="match status" value="1"/>
</dbReference>
<dbReference type="Gene3D" id="3.30.230.10">
    <property type="match status" value="1"/>
</dbReference>
<dbReference type="Gene3D" id="3.30.70.240">
    <property type="match status" value="1"/>
</dbReference>
<dbReference type="Gene3D" id="3.30.70.870">
    <property type="entry name" value="Elongation Factor G (Translational Gtpase), domain 3"/>
    <property type="match status" value="1"/>
</dbReference>
<dbReference type="Gene3D" id="3.40.50.300">
    <property type="entry name" value="P-loop containing nucleotide triphosphate hydrolases"/>
    <property type="match status" value="1"/>
</dbReference>
<dbReference type="Gene3D" id="2.40.30.10">
    <property type="entry name" value="Translation factors"/>
    <property type="match status" value="1"/>
</dbReference>
<dbReference type="HAMAP" id="MF_00054_B">
    <property type="entry name" value="EF_G_EF_2_B"/>
    <property type="match status" value="1"/>
</dbReference>
<dbReference type="InterPro" id="IPR041095">
    <property type="entry name" value="EFG_II"/>
</dbReference>
<dbReference type="InterPro" id="IPR009022">
    <property type="entry name" value="EFG_III"/>
</dbReference>
<dbReference type="InterPro" id="IPR035647">
    <property type="entry name" value="EFG_III/V"/>
</dbReference>
<dbReference type="InterPro" id="IPR047872">
    <property type="entry name" value="EFG_IV"/>
</dbReference>
<dbReference type="InterPro" id="IPR035649">
    <property type="entry name" value="EFG_V"/>
</dbReference>
<dbReference type="InterPro" id="IPR000640">
    <property type="entry name" value="EFG_V-like"/>
</dbReference>
<dbReference type="InterPro" id="IPR004161">
    <property type="entry name" value="EFTu-like_2"/>
</dbReference>
<dbReference type="InterPro" id="IPR031157">
    <property type="entry name" value="G_TR_CS"/>
</dbReference>
<dbReference type="InterPro" id="IPR027417">
    <property type="entry name" value="P-loop_NTPase"/>
</dbReference>
<dbReference type="InterPro" id="IPR020568">
    <property type="entry name" value="Ribosomal_Su5_D2-typ_SF"/>
</dbReference>
<dbReference type="InterPro" id="IPR014721">
    <property type="entry name" value="Ribsml_uS5_D2-typ_fold_subgr"/>
</dbReference>
<dbReference type="InterPro" id="IPR005225">
    <property type="entry name" value="Small_GTP-bd"/>
</dbReference>
<dbReference type="InterPro" id="IPR000795">
    <property type="entry name" value="T_Tr_GTP-bd_dom"/>
</dbReference>
<dbReference type="InterPro" id="IPR009000">
    <property type="entry name" value="Transl_B-barrel_sf"/>
</dbReference>
<dbReference type="InterPro" id="IPR004540">
    <property type="entry name" value="Transl_elong_EFG/EF2"/>
</dbReference>
<dbReference type="InterPro" id="IPR005517">
    <property type="entry name" value="Transl_elong_EFG/EF2_IV"/>
</dbReference>
<dbReference type="NCBIfam" id="TIGR00484">
    <property type="entry name" value="EF-G"/>
    <property type="match status" value="1"/>
</dbReference>
<dbReference type="NCBIfam" id="NF009381">
    <property type="entry name" value="PRK12740.1-5"/>
    <property type="match status" value="1"/>
</dbReference>
<dbReference type="NCBIfam" id="TIGR00231">
    <property type="entry name" value="small_GTP"/>
    <property type="match status" value="1"/>
</dbReference>
<dbReference type="PANTHER" id="PTHR43261:SF1">
    <property type="entry name" value="RIBOSOME-RELEASING FACTOR 2, MITOCHONDRIAL"/>
    <property type="match status" value="1"/>
</dbReference>
<dbReference type="PANTHER" id="PTHR43261">
    <property type="entry name" value="TRANSLATION ELONGATION FACTOR G-RELATED"/>
    <property type="match status" value="1"/>
</dbReference>
<dbReference type="Pfam" id="PF00679">
    <property type="entry name" value="EFG_C"/>
    <property type="match status" value="1"/>
</dbReference>
<dbReference type="Pfam" id="PF14492">
    <property type="entry name" value="EFG_III"/>
    <property type="match status" value="1"/>
</dbReference>
<dbReference type="Pfam" id="PF03764">
    <property type="entry name" value="EFG_IV"/>
    <property type="match status" value="1"/>
</dbReference>
<dbReference type="Pfam" id="PF00009">
    <property type="entry name" value="GTP_EFTU"/>
    <property type="match status" value="1"/>
</dbReference>
<dbReference type="Pfam" id="PF03144">
    <property type="entry name" value="GTP_EFTU_D2"/>
    <property type="match status" value="1"/>
</dbReference>
<dbReference type="PRINTS" id="PR00315">
    <property type="entry name" value="ELONGATNFCT"/>
</dbReference>
<dbReference type="SMART" id="SM00838">
    <property type="entry name" value="EFG_C"/>
    <property type="match status" value="1"/>
</dbReference>
<dbReference type="SMART" id="SM00889">
    <property type="entry name" value="EFG_IV"/>
    <property type="match status" value="1"/>
</dbReference>
<dbReference type="SUPFAM" id="SSF54980">
    <property type="entry name" value="EF-G C-terminal domain-like"/>
    <property type="match status" value="2"/>
</dbReference>
<dbReference type="SUPFAM" id="SSF52540">
    <property type="entry name" value="P-loop containing nucleoside triphosphate hydrolases"/>
    <property type="match status" value="1"/>
</dbReference>
<dbReference type="SUPFAM" id="SSF54211">
    <property type="entry name" value="Ribosomal protein S5 domain 2-like"/>
    <property type="match status" value="1"/>
</dbReference>
<dbReference type="SUPFAM" id="SSF50447">
    <property type="entry name" value="Translation proteins"/>
    <property type="match status" value="1"/>
</dbReference>
<dbReference type="PROSITE" id="PS00301">
    <property type="entry name" value="G_TR_1"/>
    <property type="match status" value="1"/>
</dbReference>
<dbReference type="PROSITE" id="PS51722">
    <property type="entry name" value="G_TR_2"/>
    <property type="match status" value="1"/>
</dbReference>
<organism>
    <name type="scientific">Shigella flexneri serotype 5b (strain 8401)</name>
    <dbReference type="NCBI Taxonomy" id="373384"/>
    <lineage>
        <taxon>Bacteria</taxon>
        <taxon>Pseudomonadati</taxon>
        <taxon>Pseudomonadota</taxon>
        <taxon>Gammaproteobacteria</taxon>
        <taxon>Enterobacterales</taxon>
        <taxon>Enterobacteriaceae</taxon>
        <taxon>Shigella</taxon>
    </lineage>
</organism>
<name>EFG_SHIF8</name>
<gene>
    <name evidence="2" type="primary">fusA</name>
    <name type="ordered locus">SFV_3345</name>
</gene>
<accession>Q0SZX7</accession>